<feature type="chain" id="PRO_0000153388" description="Histidinol-phosphate aminotransferase 1">
    <location>
        <begin position="1"/>
        <end position="366"/>
    </location>
</feature>
<feature type="modified residue" description="N6-(pyridoxal phosphate)lysine" evidence="1">
    <location>
        <position position="226"/>
    </location>
</feature>
<name>HIS81_MANSM</name>
<accession>Q65S79</accession>
<protein>
    <recommendedName>
        <fullName evidence="1">Histidinol-phosphate aminotransferase 1</fullName>
        <ecNumber evidence="1">2.6.1.9</ecNumber>
    </recommendedName>
    <alternativeName>
        <fullName evidence="1">Imidazole acetol-phosphate transaminase 1</fullName>
    </alternativeName>
</protein>
<comment type="catalytic activity">
    <reaction evidence="1">
        <text>L-histidinol phosphate + 2-oxoglutarate = 3-(imidazol-4-yl)-2-oxopropyl phosphate + L-glutamate</text>
        <dbReference type="Rhea" id="RHEA:23744"/>
        <dbReference type="ChEBI" id="CHEBI:16810"/>
        <dbReference type="ChEBI" id="CHEBI:29985"/>
        <dbReference type="ChEBI" id="CHEBI:57766"/>
        <dbReference type="ChEBI" id="CHEBI:57980"/>
        <dbReference type="EC" id="2.6.1.9"/>
    </reaction>
</comment>
<comment type="cofactor">
    <cofactor evidence="1">
        <name>pyridoxal 5'-phosphate</name>
        <dbReference type="ChEBI" id="CHEBI:597326"/>
    </cofactor>
</comment>
<comment type="pathway">
    <text evidence="1">Amino-acid biosynthesis; L-histidine biosynthesis; L-histidine from 5-phospho-alpha-D-ribose 1-diphosphate: step 7/9.</text>
</comment>
<comment type="subunit">
    <text evidence="1">Homodimer.</text>
</comment>
<comment type="similarity">
    <text evidence="1">Belongs to the class-II pyridoxal-phosphate-dependent aminotransferase family. Histidinol-phosphate aminotransferase subfamily.</text>
</comment>
<comment type="sequence caution" evidence="2">
    <conflict type="erroneous initiation">
        <sequence resource="EMBL-CDS" id="AAU38181"/>
    </conflict>
</comment>
<evidence type="ECO:0000255" key="1">
    <source>
        <dbReference type="HAMAP-Rule" id="MF_01023"/>
    </source>
</evidence>
<evidence type="ECO:0000305" key="2"/>
<organism>
    <name type="scientific">Mannheimia succiniciproducens (strain KCTC 0769BP / MBEL55E)</name>
    <dbReference type="NCBI Taxonomy" id="221988"/>
    <lineage>
        <taxon>Bacteria</taxon>
        <taxon>Pseudomonadati</taxon>
        <taxon>Pseudomonadota</taxon>
        <taxon>Gammaproteobacteria</taxon>
        <taxon>Pasteurellales</taxon>
        <taxon>Pasteurellaceae</taxon>
        <taxon>Basfia</taxon>
    </lineage>
</organism>
<proteinExistence type="inferred from homology"/>
<reference key="1">
    <citation type="journal article" date="2004" name="Nat. Biotechnol.">
        <title>The genome sequence of the capnophilic rumen bacterium Mannheimia succiniciproducens.</title>
        <authorList>
            <person name="Hong S.H."/>
            <person name="Kim J.S."/>
            <person name="Lee S.Y."/>
            <person name="In Y.H."/>
            <person name="Choi S.S."/>
            <person name="Rih J.-K."/>
            <person name="Kim C.H."/>
            <person name="Jeong H."/>
            <person name="Hur C.G."/>
            <person name="Kim J.J."/>
        </authorList>
    </citation>
    <scope>NUCLEOTIDE SEQUENCE [LARGE SCALE GENOMIC DNA]</scope>
    <source>
        <strain>KCTC 0769BP / MBEL55E</strain>
    </source>
</reference>
<dbReference type="EC" id="2.6.1.9" evidence="1"/>
<dbReference type="EMBL" id="AE016827">
    <property type="protein sequence ID" value="AAU38181.1"/>
    <property type="status" value="ALT_INIT"/>
    <property type="molecule type" value="Genomic_DNA"/>
</dbReference>
<dbReference type="RefSeq" id="WP_041640217.1">
    <property type="nucleotide sequence ID" value="NC_006300.1"/>
</dbReference>
<dbReference type="SMR" id="Q65S79"/>
<dbReference type="STRING" id="221988.MS1574"/>
<dbReference type="KEGG" id="msu:MS1574"/>
<dbReference type="eggNOG" id="COG0079">
    <property type="taxonomic scope" value="Bacteria"/>
</dbReference>
<dbReference type="HOGENOM" id="CLU_017584_3_3_6"/>
<dbReference type="OrthoDB" id="9813612at2"/>
<dbReference type="UniPathway" id="UPA00031">
    <property type="reaction ID" value="UER00012"/>
</dbReference>
<dbReference type="Proteomes" id="UP000000607">
    <property type="component" value="Chromosome"/>
</dbReference>
<dbReference type="GO" id="GO:0004400">
    <property type="term" value="F:histidinol-phosphate transaminase activity"/>
    <property type="evidence" value="ECO:0007669"/>
    <property type="project" value="UniProtKB-UniRule"/>
</dbReference>
<dbReference type="GO" id="GO:0030170">
    <property type="term" value="F:pyridoxal phosphate binding"/>
    <property type="evidence" value="ECO:0007669"/>
    <property type="project" value="InterPro"/>
</dbReference>
<dbReference type="GO" id="GO:0000105">
    <property type="term" value="P:L-histidine biosynthetic process"/>
    <property type="evidence" value="ECO:0007669"/>
    <property type="project" value="UniProtKB-UniRule"/>
</dbReference>
<dbReference type="CDD" id="cd00609">
    <property type="entry name" value="AAT_like"/>
    <property type="match status" value="1"/>
</dbReference>
<dbReference type="Gene3D" id="3.90.1150.10">
    <property type="entry name" value="Aspartate Aminotransferase, domain 1"/>
    <property type="match status" value="1"/>
</dbReference>
<dbReference type="Gene3D" id="3.40.640.10">
    <property type="entry name" value="Type I PLP-dependent aspartate aminotransferase-like (Major domain)"/>
    <property type="match status" value="1"/>
</dbReference>
<dbReference type="HAMAP" id="MF_01023">
    <property type="entry name" value="HisC_aminotrans_2"/>
    <property type="match status" value="1"/>
</dbReference>
<dbReference type="InterPro" id="IPR004839">
    <property type="entry name" value="Aminotransferase_I/II_large"/>
</dbReference>
<dbReference type="InterPro" id="IPR005861">
    <property type="entry name" value="HisP_aminotrans"/>
</dbReference>
<dbReference type="InterPro" id="IPR050106">
    <property type="entry name" value="HistidinolP_aminotransfase"/>
</dbReference>
<dbReference type="InterPro" id="IPR004838">
    <property type="entry name" value="NHTrfase_class1_PyrdxlP-BS"/>
</dbReference>
<dbReference type="InterPro" id="IPR015424">
    <property type="entry name" value="PyrdxlP-dep_Trfase"/>
</dbReference>
<dbReference type="InterPro" id="IPR015421">
    <property type="entry name" value="PyrdxlP-dep_Trfase_major"/>
</dbReference>
<dbReference type="InterPro" id="IPR015422">
    <property type="entry name" value="PyrdxlP-dep_Trfase_small"/>
</dbReference>
<dbReference type="NCBIfam" id="TIGR01141">
    <property type="entry name" value="hisC"/>
    <property type="match status" value="1"/>
</dbReference>
<dbReference type="PANTHER" id="PTHR43643:SF3">
    <property type="entry name" value="HISTIDINOL-PHOSPHATE AMINOTRANSFERASE"/>
    <property type="match status" value="1"/>
</dbReference>
<dbReference type="PANTHER" id="PTHR43643">
    <property type="entry name" value="HISTIDINOL-PHOSPHATE AMINOTRANSFERASE 2"/>
    <property type="match status" value="1"/>
</dbReference>
<dbReference type="Pfam" id="PF00155">
    <property type="entry name" value="Aminotran_1_2"/>
    <property type="match status" value="1"/>
</dbReference>
<dbReference type="SUPFAM" id="SSF53383">
    <property type="entry name" value="PLP-dependent transferases"/>
    <property type="match status" value="1"/>
</dbReference>
<gene>
    <name evidence="1" type="primary">hisC1</name>
    <name type="ordered locus">MS1574</name>
</gene>
<sequence length="366" mass="40606">MTFLQQANTGVQALSPYQAGKPIEELERELGISNIIKLASNENPFGFPESAKKAIQNQLDNLTRYPDSNGFSLKAAIAEKFNLQPEQITLGNGSNDLIELIAHTFATEGDEIIFSQYAFIVYPLITKAINAKAREIPAKNWGHDLEAFLAAINEKTKLIFIANPNNPTGNFLTEAEIDSFLAKVPPHIVVALDEAYTEFTAKEERVNSLALLKKYPNLVVSRSLSKAYGLAGLRIGFAVSNPEIAGLFNRVRQPFNVNSLALAAAEAVLNDDDFVEKAAENNRRELKRYEEFCQKYGLQYIPSKGNFITIDFQQPAAPVYDALLHEGVIVRPIAGYGMPNHLRISIGLPEENQRLFDALIKILNLK</sequence>
<keyword id="KW-0028">Amino-acid biosynthesis</keyword>
<keyword id="KW-0032">Aminotransferase</keyword>
<keyword id="KW-0368">Histidine biosynthesis</keyword>
<keyword id="KW-0663">Pyridoxal phosphate</keyword>
<keyword id="KW-0808">Transferase</keyword>